<protein>
    <recommendedName>
        <fullName evidence="1">1-(5-phosphoribosyl)-5-[(5-phosphoribosylamino)methylideneamino] imidazole-4-carboxamide isomerase</fullName>
        <ecNumber evidence="1">5.3.1.16</ecNumber>
    </recommendedName>
    <alternativeName>
        <fullName evidence="1">Phosphoribosylformimino-5-aminoimidazole carboxamide ribotide isomerase</fullName>
    </alternativeName>
</protein>
<reference key="1">
    <citation type="journal article" date="2004" name="Proc. Natl. Acad. Sci. U.S.A.">
        <title>Structural flexibility in the Burkholderia mallei genome.</title>
        <authorList>
            <person name="Nierman W.C."/>
            <person name="DeShazer D."/>
            <person name="Kim H.S."/>
            <person name="Tettelin H."/>
            <person name="Nelson K.E."/>
            <person name="Feldblyum T.V."/>
            <person name="Ulrich R.L."/>
            <person name="Ronning C.M."/>
            <person name="Brinkac L.M."/>
            <person name="Daugherty S.C."/>
            <person name="Davidsen T.D."/>
            <person name="DeBoy R.T."/>
            <person name="Dimitrov G."/>
            <person name="Dodson R.J."/>
            <person name="Durkin A.S."/>
            <person name="Gwinn M.L."/>
            <person name="Haft D.H."/>
            <person name="Khouri H.M."/>
            <person name="Kolonay J.F."/>
            <person name="Madupu R."/>
            <person name="Mohammoud Y."/>
            <person name="Nelson W.C."/>
            <person name="Radune D."/>
            <person name="Romero C.M."/>
            <person name="Sarria S."/>
            <person name="Selengut J."/>
            <person name="Shamblin C."/>
            <person name="Sullivan S.A."/>
            <person name="White O."/>
            <person name="Yu Y."/>
            <person name="Zafar N."/>
            <person name="Zhou L."/>
            <person name="Fraser C.M."/>
        </authorList>
    </citation>
    <scope>NUCLEOTIDE SEQUENCE [LARGE SCALE GENOMIC DNA]</scope>
    <source>
        <strain>ATCC 23344</strain>
    </source>
</reference>
<proteinExistence type="inferred from homology"/>
<accession>Q62GE4</accession>
<dbReference type="EC" id="5.3.1.16" evidence="1"/>
<dbReference type="EMBL" id="CP000010">
    <property type="protein sequence ID" value="AAU48277.1"/>
    <property type="molecule type" value="Genomic_DNA"/>
</dbReference>
<dbReference type="RefSeq" id="WP_004199906.1">
    <property type="nucleotide sequence ID" value="NC_006348.1"/>
</dbReference>
<dbReference type="RefSeq" id="YP_104230.1">
    <property type="nucleotide sequence ID" value="NC_006348.1"/>
</dbReference>
<dbReference type="SMR" id="Q62GE4"/>
<dbReference type="GeneID" id="93061751"/>
<dbReference type="KEGG" id="bma:BMA2709"/>
<dbReference type="PATRIC" id="fig|243160.12.peg.2779"/>
<dbReference type="eggNOG" id="COG0106">
    <property type="taxonomic scope" value="Bacteria"/>
</dbReference>
<dbReference type="HOGENOM" id="CLU_048577_1_1_4"/>
<dbReference type="UniPathway" id="UPA00031">
    <property type="reaction ID" value="UER00009"/>
</dbReference>
<dbReference type="Proteomes" id="UP000006693">
    <property type="component" value="Chromosome 1"/>
</dbReference>
<dbReference type="GO" id="GO:0005737">
    <property type="term" value="C:cytoplasm"/>
    <property type="evidence" value="ECO:0007669"/>
    <property type="project" value="UniProtKB-SubCell"/>
</dbReference>
<dbReference type="GO" id="GO:0003949">
    <property type="term" value="F:1-(5-phosphoribosyl)-5-[(5-phosphoribosylamino)methylideneamino]imidazole-4-carboxamide isomerase activity"/>
    <property type="evidence" value="ECO:0007669"/>
    <property type="project" value="UniProtKB-UniRule"/>
</dbReference>
<dbReference type="GO" id="GO:0000105">
    <property type="term" value="P:L-histidine biosynthetic process"/>
    <property type="evidence" value="ECO:0007669"/>
    <property type="project" value="UniProtKB-UniRule"/>
</dbReference>
<dbReference type="GO" id="GO:0000162">
    <property type="term" value="P:L-tryptophan biosynthetic process"/>
    <property type="evidence" value="ECO:0007669"/>
    <property type="project" value="TreeGrafter"/>
</dbReference>
<dbReference type="CDD" id="cd04732">
    <property type="entry name" value="HisA"/>
    <property type="match status" value="1"/>
</dbReference>
<dbReference type="FunFam" id="3.20.20.70:FF:000009">
    <property type="entry name" value="1-(5-phosphoribosyl)-5-[(5-phosphoribosylamino)methylideneamino] imidazole-4-carboxamide isomerase"/>
    <property type="match status" value="1"/>
</dbReference>
<dbReference type="Gene3D" id="3.20.20.70">
    <property type="entry name" value="Aldolase class I"/>
    <property type="match status" value="1"/>
</dbReference>
<dbReference type="HAMAP" id="MF_01014">
    <property type="entry name" value="HisA"/>
    <property type="match status" value="1"/>
</dbReference>
<dbReference type="InterPro" id="IPR013785">
    <property type="entry name" value="Aldolase_TIM"/>
</dbReference>
<dbReference type="InterPro" id="IPR006062">
    <property type="entry name" value="His_biosynth"/>
</dbReference>
<dbReference type="InterPro" id="IPR006063">
    <property type="entry name" value="HisA_bact_arch"/>
</dbReference>
<dbReference type="InterPro" id="IPR044524">
    <property type="entry name" value="Isoase_HisA-like"/>
</dbReference>
<dbReference type="InterPro" id="IPR023016">
    <property type="entry name" value="Isoase_HisA-like_bact"/>
</dbReference>
<dbReference type="InterPro" id="IPR011060">
    <property type="entry name" value="RibuloseP-bd_barrel"/>
</dbReference>
<dbReference type="NCBIfam" id="TIGR00007">
    <property type="entry name" value="1-(5-phosphoribosyl)-5-[(5-phosphoribosylamino)methylideneamino]imidazole-4-carboxamide isomerase"/>
    <property type="match status" value="1"/>
</dbReference>
<dbReference type="NCBIfam" id="NF010112">
    <property type="entry name" value="PRK13585.1"/>
    <property type="match status" value="1"/>
</dbReference>
<dbReference type="PANTHER" id="PTHR43090">
    <property type="entry name" value="1-(5-PHOSPHORIBOSYL)-5-[(5-PHOSPHORIBOSYLAMINO)METHYLIDENEAMINO] IMIDAZOLE-4-CARBOXAMIDE ISOMERASE"/>
    <property type="match status" value="1"/>
</dbReference>
<dbReference type="PANTHER" id="PTHR43090:SF2">
    <property type="entry name" value="1-(5-PHOSPHORIBOSYL)-5-[(5-PHOSPHORIBOSYLAMINO)METHYLIDENEAMINO] IMIDAZOLE-4-CARBOXAMIDE ISOMERASE"/>
    <property type="match status" value="1"/>
</dbReference>
<dbReference type="Pfam" id="PF00977">
    <property type="entry name" value="His_biosynth"/>
    <property type="match status" value="1"/>
</dbReference>
<dbReference type="SUPFAM" id="SSF51366">
    <property type="entry name" value="Ribulose-phoshate binding barrel"/>
    <property type="match status" value="1"/>
</dbReference>
<sequence>MLLIPAIDLKDGQCVRLKQGDMDQATIFSEDPAAMARKWVDLGARRLHLVDLNGAFAGKPKNLEAIEAILGEVGDEIPVQLGGGIRSLETIEKYLDAGLSYVIIGTAAVKDPGFLQDACSAFAGNIIVGLDAKDGKVATDGWSKLTGHEVIDLARKFEDYGVESIVYTDIGRDGMLQGINIEATVKLAQAVGIPVIASGGLSNIVDIEKLCEVEDEGIEGVICGRAIYSGDLDFAAAQKRADELNGELDDA</sequence>
<keyword id="KW-0028">Amino-acid biosynthesis</keyword>
<keyword id="KW-0963">Cytoplasm</keyword>
<keyword id="KW-0368">Histidine biosynthesis</keyword>
<keyword id="KW-0413">Isomerase</keyword>
<keyword id="KW-1185">Reference proteome</keyword>
<evidence type="ECO:0000255" key="1">
    <source>
        <dbReference type="HAMAP-Rule" id="MF_01014"/>
    </source>
</evidence>
<name>HIS4_BURMA</name>
<comment type="catalytic activity">
    <reaction evidence="1">
        <text>1-(5-phospho-beta-D-ribosyl)-5-[(5-phospho-beta-D-ribosylamino)methylideneamino]imidazole-4-carboxamide = 5-[(5-phospho-1-deoxy-D-ribulos-1-ylimino)methylamino]-1-(5-phospho-beta-D-ribosyl)imidazole-4-carboxamide</text>
        <dbReference type="Rhea" id="RHEA:15469"/>
        <dbReference type="ChEBI" id="CHEBI:58435"/>
        <dbReference type="ChEBI" id="CHEBI:58525"/>
        <dbReference type="EC" id="5.3.1.16"/>
    </reaction>
</comment>
<comment type="pathway">
    <text evidence="1">Amino-acid biosynthesis; L-histidine biosynthesis; L-histidine from 5-phospho-alpha-D-ribose 1-diphosphate: step 4/9.</text>
</comment>
<comment type="subcellular location">
    <subcellularLocation>
        <location evidence="1">Cytoplasm</location>
    </subcellularLocation>
</comment>
<comment type="similarity">
    <text evidence="1">Belongs to the HisA/HisF family.</text>
</comment>
<feature type="chain" id="PRO_0000141990" description="1-(5-phosphoribosyl)-5-[(5-phosphoribosylamino)methylideneamino] imidazole-4-carboxamide isomerase">
    <location>
        <begin position="1"/>
        <end position="251"/>
    </location>
</feature>
<feature type="active site" description="Proton acceptor" evidence="1">
    <location>
        <position position="8"/>
    </location>
</feature>
<feature type="active site" description="Proton donor" evidence="1">
    <location>
        <position position="131"/>
    </location>
</feature>
<gene>
    <name evidence="1" type="primary">hisA</name>
    <name type="ordered locus">BMA2709</name>
</gene>
<organism>
    <name type="scientific">Burkholderia mallei (strain ATCC 23344)</name>
    <dbReference type="NCBI Taxonomy" id="243160"/>
    <lineage>
        <taxon>Bacteria</taxon>
        <taxon>Pseudomonadati</taxon>
        <taxon>Pseudomonadota</taxon>
        <taxon>Betaproteobacteria</taxon>
        <taxon>Burkholderiales</taxon>
        <taxon>Burkholderiaceae</taxon>
        <taxon>Burkholderia</taxon>
        <taxon>pseudomallei group</taxon>
    </lineage>
</organism>